<sequence>MALLQIAEPGLSAAPHQRKLAVGIDLGTTNSLVATVRSGQAETLGDNNNQHLLPSVVSYTAEQVVVGEQAKHDASLDPANTIVSVKRFLGRSLNDIRRSYPDLPYDFDESNPNSPLLNVTGRQVNPVEVSSEILTTLRLRAEQSLGEELSGAVVTVPAYFDDAQRQGTKDAAQLAGLKVLRLLNEPTAAAIAYGLDTAQEGVIAVYDLGGGTFDISILRLSKGVFEVLATGGDSALGGDDFDHMIVKHFRQQLGLEGALSKRLHRVLLDKAKFAKESLSDNDTVTVDFADDEQKLLSLSISRETFQGLIADLTKSTLRACRRALKDAELEKDEVLEVVMVGGSTRVPYVREQVGEFFGRTPLTSIDPDKVVAIGASIQADILVGNKPDGEMLLLDVLPLSLGLETMGGLVEKVIHRNTTIPVAKAQEFTTFKDGQTAMMIHVLQGERELVDDCRSLAKFTLHGIPPMAAGAAHIRVTFQVDADGLLNVMAMEKSSGVQAEIQVKPSYGLDESQISDMLKASMQNATGDMQARMLKEQQVEAARVHEALQAALNADGAELLSAAEIGTIQASLEVLDIAGKNDDIDAIKQAISAADAASQIFAEKRMDHSIKKALAGHTVDSI</sequence>
<protein>
    <recommendedName>
        <fullName evidence="1">Chaperone protein HscA homolog</fullName>
    </recommendedName>
</protein>
<feature type="chain" id="PRO_1000044868" description="Chaperone protein HscA homolog">
    <location>
        <begin position="1"/>
        <end position="622"/>
    </location>
</feature>
<reference key="1">
    <citation type="submission" date="2006-06" db="EMBL/GenBank/DDBJ databases">
        <title>Complete sequence of Pseudoalteromonas atlantica T6c.</title>
        <authorList>
            <consortium name="US DOE Joint Genome Institute"/>
            <person name="Copeland A."/>
            <person name="Lucas S."/>
            <person name="Lapidus A."/>
            <person name="Barry K."/>
            <person name="Detter J.C."/>
            <person name="Glavina del Rio T."/>
            <person name="Hammon N."/>
            <person name="Israni S."/>
            <person name="Dalin E."/>
            <person name="Tice H."/>
            <person name="Pitluck S."/>
            <person name="Saunders E."/>
            <person name="Brettin T."/>
            <person name="Bruce D."/>
            <person name="Han C."/>
            <person name="Tapia R."/>
            <person name="Gilna P."/>
            <person name="Schmutz J."/>
            <person name="Larimer F."/>
            <person name="Land M."/>
            <person name="Hauser L."/>
            <person name="Kyrpides N."/>
            <person name="Kim E."/>
            <person name="Karls A.C."/>
            <person name="Bartlett D."/>
            <person name="Higgins B.P."/>
            <person name="Richardson P."/>
        </authorList>
    </citation>
    <scope>NUCLEOTIDE SEQUENCE [LARGE SCALE GENOMIC DNA]</scope>
    <source>
        <strain>T6c / ATCC BAA-1087</strain>
    </source>
</reference>
<proteinExistence type="inferred from homology"/>
<comment type="function">
    <text evidence="1">Chaperone involved in the maturation of iron-sulfur cluster-containing proteins. Has a low intrinsic ATPase activity which is markedly stimulated by HscB.</text>
</comment>
<comment type="similarity">
    <text evidence="1">Belongs to the heat shock protein 70 family.</text>
</comment>
<organism>
    <name type="scientific">Pseudoalteromonas atlantica (strain T6c / ATCC BAA-1087)</name>
    <dbReference type="NCBI Taxonomy" id="3042615"/>
    <lineage>
        <taxon>Bacteria</taxon>
        <taxon>Pseudomonadati</taxon>
        <taxon>Pseudomonadota</taxon>
        <taxon>Gammaproteobacteria</taxon>
        <taxon>Alteromonadales</taxon>
        <taxon>Alteromonadaceae</taxon>
        <taxon>Paraglaciecola</taxon>
    </lineage>
</organism>
<evidence type="ECO:0000255" key="1">
    <source>
        <dbReference type="HAMAP-Rule" id="MF_00679"/>
    </source>
</evidence>
<keyword id="KW-0067">ATP-binding</keyword>
<keyword id="KW-0143">Chaperone</keyword>
<keyword id="KW-0547">Nucleotide-binding</keyword>
<accession>Q15WH0</accession>
<gene>
    <name evidence="1" type="primary">hscA</name>
    <name type="ordered locus">Patl_1242</name>
</gene>
<name>HSCA_PSEA6</name>
<dbReference type="EMBL" id="CP000388">
    <property type="protein sequence ID" value="ABG39768.1"/>
    <property type="molecule type" value="Genomic_DNA"/>
</dbReference>
<dbReference type="RefSeq" id="WP_011574096.1">
    <property type="nucleotide sequence ID" value="NC_008228.1"/>
</dbReference>
<dbReference type="SMR" id="Q15WH0"/>
<dbReference type="STRING" id="342610.Patl_1242"/>
<dbReference type="KEGG" id="pat:Patl_1242"/>
<dbReference type="eggNOG" id="COG0443">
    <property type="taxonomic scope" value="Bacteria"/>
</dbReference>
<dbReference type="HOGENOM" id="CLU_005965_2_4_6"/>
<dbReference type="OrthoDB" id="9766019at2"/>
<dbReference type="Proteomes" id="UP000001981">
    <property type="component" value="Chromosome"/>
</dbReference>
<dbReference type="GO" id="GO:0005524">
    <property type="term" value="F:ATP binding"/>
    <property type="evidence" value="ECO:0007669"/>
    <property type="project" value="UniProtKB-KW"/>
</dbReference>
<dbReference type="GO" id="GO:0016887">
    <property type="term" value="F:ATP hydrolysis activity"/>
    <property type="evidence" value="ECO:0007669"/>
    <property type="project" value="UniProtKB-UniRule"/>
</dbReference>
<dbReference type="GO" id="GO:0140662">
    <property type="term" value="F:ATP-dependent protein folding chaperone"/>
    <property type="evidence" value="ECO:0007669"/>
    <property type="project" value="InterPro"/>
</dbReference>
<dbReference type="GO" id="GO:0051082">
    <property type="term" value="F:unfolded protein binding"/>
    <property type="evidence" value="ECO:0007669"/>
    <property type="project" value="InterPro"/>
</dbReference>
<dbReference type="GO" id="GO:0016226">
    <property type="term" value="P:iron-sulfur cluster assembly"/>
    <property type="evidence" value="ECO:0007669"/>
    <property type="project" value="InterPro"/>
</dbReference>
<dbReference type="CDD" id="cd10236">
    <property type="entry name" value="ASKHA_NBD_HSP70_HscA"/>
    <property type="match status" value="1"/>
</dbReference>
<dbReference type="FunFam" id="3.30.420.40:FF:000046">
    <property type="entry name" value="Chaperone protein HscA"/>
    <property type="match status" value="1"/>
</dbReference>
<dbReference type="FunFam" id="2.60.34.10:FF:000005">
    <property type="entry name" value="Chaperone protein HscA homolog"/>
    <property type="match status" value="1"/>
</dbReference>
<dbReference type="Gene3D" id="1.20.1270.10">
    <property type="match status" value="1"/>
</dbReference>
<dbReference type="Gene3D" id="3.30.420.40">
    <property type="match status" value="2"/>
</dbReference>
<dbReference type="Gene3D" id="3.90.640.10">
    <property type="entry name" value="Actin, Chain A, domain 4"/>
    <property type="match status" value="1"/>
</dbReference>
<dbReference type="Gene3D" id="2.60.34.10">
    <property type="entry name" value="Substrate Binding Domain Of DNAk, Chain A, domain 1"/>
    <property type="match status" value="1"/>
</dbReference>
<dbReference type="HAMAP" id="MF_00679">
    <property type="entry name" value="HscA"/>
    <property type="match status" value="1"/>
</dbReference>
<dbReference type="InterPro" id="IPR043129">
    <property type="entry name" value="ATPase_NBD"/>
</dbReference>
<dbReference type="InterPro" id="IPR018181">
    <property type="entry name" value="Heat_shock_70_CS"/>
</dbReference>
<dbReference type="InterPro" id="IPR042039">
    <property type="entry name" value="HscA_NBD"/>
</dbReference>
<dbReference type="InterPro" id="IPR029048">
    <property type="entry name" value="HSP70_C_sf"/>
</dbReference>
<dbReference type="InterPro" id="IPR029047">
    <property type="entry name" value="HSP70_peptide-bd_sf"/>
</dbReference>
<dbReference type="InterPro" id="IPR013126">
    <property type="entry name" value="Hsp_70_fam"/>
</dbReference>
<dbReference type="InterPro" id="IPR010236">
    <property type="entry name" value="ISC_FeS_clus_asmbl_HscA"/>
</dbReference>
<dbReference type="NCBIfam" id="TIGR01991">
    <property type="entry name" value="HscA"/>
    <property type="match status" value="1"/>
</dbReference>
<dbReference type="NCBIfam" id="NF003520">
    <property type="entry name" value="PRK05183.1"/>
    <property type="match status" value="1"/>
</dbReference>
<dbReference type="PANTHER" id="PTHR19375">
    <property type="entry name" value="HEAT SHOCK PROTEIN 70KDA"/>
    <property type="match status" value="1"/>
</dbReference>
<dbReference type="Pfam" id="PF00012">
    <property type="entry name" value="HSP70"/>
    <property type="match status" value="1"/>
</dbReference>
<dbReference type="PRINTS" id="PR00301">
    <property type="entry name" value="HEATSHOCK70"/>
</dbReference>
<dbReference type="SUPFAM" id="SSF53067">
    <property type="entry name" value="Actin-like ATPase domain"/>
    <property type="match status" value="2"/>
</dbReference>
<dbReference type="SUPFAM" id="SSF100934">
    <property type="entry name" value="Heat shock protein 70kD (HSP70), C-terminal subdomain"/>
    <property type="match status" value="1"/>
</dbReference>
<dbReference type="SUPFAM" id="SSF100920">
    <property type="entry name" value="Heat shock protein 70kD (HSP70), peptide-binding domain"/>
    <property type="match status" value="1"/>
</dbReference>
<dbReference type="PROSITE" id="PS00297">
    <property type="entry name" value="HSP70_1"/>
    <property type="match status" value="1"/>
</dbReference>
<dbReference type="PROSITE" id="PS00329">
    <property type="entry name" value="HSP70_2"/>
    <property type="match status" value="1"/>
</dbReference>
<dbReference type="PROSITE" id="PS01036">
    <property type="entry name" value="HSP70_3"/>
    <property type="match status" value="1"/>
</dbReference>